<proteinExistence type="evidence at transcript level"/>
<evidence type="ECO:0000250" key="1"/>
<evidence type="ECO:0000255" key="2"/>
<evidence type="ECO:0000305" key="3"/>
<reference key="1">
    <citation type="journal article" date="2007" name="Peptides">
        <title>A new family of antimicrobial peptides from skin secretions of Rana pleuraden.</title>
        <authorList>
            <person name="Wang X."/>
            <person name="Song Y."/>
            <person name="Li J."/>
            <person name="Liu H."/>
            <person name="Xu X."/>
            <person name="Lai R."/>
            <person name="Zhang K."/>
        </authorList>
    </citation>
    <scope>NUCLEOTIDE SEQUENCE [MRNA]</scope>
    <source>
        <tissue>Skin</tissue>
    </source>
</reference>
<accession>A8B5Q0</accession>
<keyword id="KW-0878">Amphibian defense peptide</keyword>
<keyword id="KW-0044">Antibiotic</keyword>
<keyword id="KW-0929">Antimicrobial</keyword>
<keyword id="KW-0165">Cleavage on pair of basic residues</keyword>
<keyword id="KW-0204">Cytolysis</keyword>
<keyword id="KW-1015">Disulfide bond</keyword>
<keyword id="KW-0354">Hemolysis</keyword>
<keyword id="KW-0964">Secreted</keyword>
<keyword id="KW-0732">Signal</keyword>
<feature type="signal peptide" evidence="2">
    <location>
        <begin position="1"/>
        <end position="22"/>
    </location>
</feature>
<feature type="propeptide" id="PRO_0000314004" evidence="1">
    <location>
        <begin position="23"/>
        <end position="43"/>
    </location>
</feature>
<feature type="peptide" id="PRO_0000314005" description="Pleurain-A4">
    <location>
        <begin position="44"/>
        <end position="69"/>
    </location>
</feature>
<feature type="disulfide bond" evidence="1">
    <location>
        <begin position="63"/>
        <end position="69"/>
    </location>
</feature>
<organism>
    <name type="scientific">Nidirana pleuraden</name>
    <name type="common">Yunnan pond frog</name>
    <name type="synonym">Babina pleuraden</name>
    <dbReference type="NCBI Taxonomy" id="369511"/>
    <lineage>
        <taxon>Eukaryota</taxon>
        <taxon>Metazoa</taxon>
        <taxon>Chordata</taxon>
        <taxon>Craniata</taxon>
        <taxon>Vertebrata</taxon>
        <taxon>Euteleostomi</taxon>
        <taxon>Amphibia</taxon>
        <taxon>Batrachia</taxon>
        <taxon>Anura</taxon>
        <taxon>Neobatrachia</taxon>
        <taxon>Ranoidea</taxon>
        <taxon>Ranidae</taxon>
        <taxon>Nidirana</taxon>
    </lineage>
</organism>
<sequence>MFTLKKTLLLLFFLGTISISLCKQERDADEDDGRKMTEEEVKRSIITTTKEAKLPQLWKQIACRLYNTC</sequence>
<name>PLEA4_NIDPL</name>
<dbReference type="EMBL" id="EF621709">
    <property type="protein sequence ID" value="ABU95405.1"/>
    <property type="molecule type" value="mRNA"/>
</dbReference>
<dbReference type="GO" id="GO:0005576">
    <property type="term" value="C:extracellular region"/>
    <property type="evidence" value="ECO:0007669"/>
    <property type="project" value="UniProtKB-SubCell"/>
</dbReference>
<dbReference type="GO" id="GO:0042742">
    <property type="term" value="P:defense response to bacterium"/>
    <property type="evidence" value="ECO:0007669"/>
    <property type="project" value="UniProtKB-KW"/>
</dbReference>
<dbReference type="GO" id="GO:0031640">
    <property type="term" value="P:killing of cells of another organism"/>
    <property type="evidence" value="ECO:0007669"/>
    <property type="project" value="UniProtKB-KW"/>
</dbReference>
<dbReference type="InterPro" id="IPR004275">
    <property type="entry name" value="Frog_antimicrobial_propeptide"/>
</dbReference>
<dbReference type="Pfam" id="PF03032">
    <property type="entry name" value="FSAP_sig_propep"/>
    <property type="match status" value="1"/>
</dbReference>
<protein>
    <recommendedName>
        <fullName>Pleurain-A4</fullName>
    </recommendedName>
</protein>
<comment type="function">
    <text evidence="1">Antimicrobial peptide. Has activity against Gram-positive and -negative bacteria, and fungi. Has little hemolytic activity on red blood cells (By similarity).</text>
</comment>
<comment type="subcellular location">
    <subcellularLocation>
        <location evidence="1">Secreted</location>
    </subcellularLocation>
</comment>
<comment type="tissue specificity">
    <text>Expressed by the skin glands.</text>
</comment>
<comment type="similarity">
    <text evidence="3">Belongs to the frog skin active peptide (FSAP) family. Pleurain subfamily.</text>
</comment>